<gene>
    <name evidence="12" type="primary">CEP2</name>
    <name evidence="13" type="ordered locus">At3g48340</name>
    <name evidence="14" type="ORF">T29H11.140</name>
</gene>
<accession>Q9STL4</accession>
<sequence length="361" mass="40371">MKKLLLIFLFSLVILQTACGFDYDDKEIESEEGLSTLYDRWRSHHSVPRSLNEREKRFNVFRHNVMHVHNTNKKNRSYKLKLNKFADLTINEFKNAYTGSNIKHHRMLQGPKRGSKQFMYDHENLSKLPSSVDWRKKGAVTEIKNQGKCGSCWAFSTVAAVEGINKIKTNKLVSLSEQELVDCDTKQNEGCNGGLMEIAFEFIKKNGGITTEDSYPYEGIDGKCDASKDNGVLVTIDGHEDVPENDENALLKAVANQPVSVAIDAGSSDFQFYSEGVFTGSCGTELNHGVAAVGYGSERGKKYWIVRNSWGAEWGEGGYIKIEREIDEPEGRCGIAMEASYPIKLSSSNPTPKDGDVKDEL</sequence>
<keyword id="KW-1015">Disulfide bond</keyword>
<keyword id="KW-0256">Endoplasmic reticulum</keyword>
<keyword id="KW-0325">Glycoprotein</keyword>
<keyword id="KW-0378">Hydrolase</keyword>
<keyword id="KW-0645">Protease</keyword>
<keyword id="KW-1185">Reference proteome</keyword>
<keyword id="KW-0732">Signal</keyword>
<keyword id="KW-0788">Thiol protease</keyword>
<keyword id="KW-0865">Zymogen</keyword>
<dbReference type="EC" id="3.4.22.-" evidence="2"/>
<dbReference type="EMBL" id="AL049659">
    <property type="protein sequence ID" value="CAB41164.1"/>
    <property type="molecule type" value="Genomic_DNA"/>
</dbReference>
<dbReference type="EMBL" id="CP002686">
    <property type="protein sequence ID" value="AEE78403.1"/>
    <property type="molecule type" value="Genomic_DNA"/>
</dbReference>
<dbReference type="PIR" id="T06708">
    <property type="entry name" value="T06708"/>
</dbReference>
<dbReference type="RefSeq" id="NP_680113.3">
    <property type="nucleotide sequence ID" value="NM_148860.5"/>
</dbReference>
<dbReference type="SMR" id="Q9STL4"/>
<dbReference type="BioGRID" id="9311">
    <property type="interactions" value="1"/>
</dbReference>
<dbReference type="FunCoup" id="Q9STL4">
    <property type="interactions" value="358"/>
</dbReference>
<dbReference type="IntAct" id="Q9STL4">
    <property type="interactions" value="1"/>
</dbReference>
<dbReference type="STRING" id="3702.Q9STL4"/>
<dbReference type="MEROPS" id="C01.A01"/>
<dbReference type="MEROPS" id="I29.003"/>
<dbReference type="GlyCosmos" id="Q9STL4">
    <property type="glycosylation" value="2 sites, No reported glycans"/>
</dbReference>
<dbReference type="GlyGen" id="Q9STL4">
    <property type="glycosylation" value="2 sites"/>
</dbReference>
<dbReference type="PaxDb" id="3702-AT3G48340.1"/>
<dbReference type="ProteomicsDB" id="223980"/>
<dbReference type="EnsemblPlants" id="AT3G48340.1">
    <property type="protein sequence ID" value="AT3G48340.1"/>
    <property type="gene ID" value="AT3G48340"/>
</dbReference>
<dbReference type="GeneID" id="823992"/>
<dbReference type="Gramene" id="AT3G48340.1">
    <property type="protein sequence ID" value="AT3G48340.1"/>
    <property type="gene ID" value="AT3G48340"/>
</dbReference>
<dbReference type="KEGG" id="ath:AT3G48340"/>
<dbReference type="Araport" id="AT3G48340"/>
<dbReference type="TAIR" id="AT3G48340">
    <property type="gene designation" value="CEP2"/>
</dbReference>
<dbReference type="eggNOG" id="KOG1543">
    <property type="taxonomic scope" value="Eukaryota"/>
</dbReference>
<dbReference type="HOGENOM" id="CLU_012184_1_0_1"/>
<dbReference type="InParanoid" id="Q9STL4"/>
<dbReference type="OMA" id="GKCDASK"/>
<dbReference type="OrthoDB" id="10253408at2759"/>
<dbReference type="PhylomeDB" id="Q9STL4"/>
<dbReference type="PRO" id="PR:Q9STL4"/>
<dbReference type="Proteomes" id="UP000006548">
    <property type="component" value="Chromosome 3"/>
</dbReference>
<dbReference type="ExpressionAtlas" id="Q9STL4">
    <property type="expression patterns" value="baseline and differential"/>
</dbReference>
<dbReference type="GO" id="GO:0005783">
    <property type="term" value="C:endoplasmic reticulum"/>
    <property type="evidence" value="ECO:0007669"/>
    <property type="project" value="UniProtKB-SubCell"/>
</dbReference>
<dbReference type="GO" id="GO:0008234">
    <property type="term" value="F:cysteine-type peptidase activity"/>
    <property type="evidence" value="ECO:0007669"/>
    <property type="project" value="UniProtKB-KW"/>
</dbReference>
<dbReference type="GO" id="GO:0006508">
    <property type="term" value="P:proteolysis"/>
    <property type="evidence" value="ECO:0007669"/>
    <property type="project" value="UniProtKB-KW"/>
</dbReference>
<dbReference type="CDD" id="cd02248">
    <property type="entry name" value="Peptidase_C1A"/>
    <property type="match status" value="1"/>
</dbReference>
<dbReference type="FunFam" id="3.90.70.10:FF:000023">
    <property type="entry name" value="Senescence-specific cysteine protease SAG39"/>
    <property type="match status" value="1"/>
</dbReference>
<dbReference type="Gene3D" id="3.90.70.10">
    <property type="entry name" value="Cysteine proteinases"/>
    <property type="match status" value="1"/>
</dbReference>
<dbReference type="InterPro" id="IPR038765">
    <property type="entry name" value="Papain-like_cys_pep_sf"/>
</dbReference>
<dbReference type="InterPro" id="IPR025661">
    <property type="entry name" value="Pept_asp_AS"/>
</dbReference>
<dbReference type="InterPro" id="IPR000169">
    <property type="entry name" value="Pept_cys_AS"/>
</dbReference>
<dbReference type="InterPro" id="IPR025660">
    <property type="entry name" value="Pept_his_AS"/>
</dbReference>
<dbReference type="InterPro" id="IPR013128">
    <property type="entry name" value="Peptidase_C1A"/>
</dbReference>
<dbReference type="InterPro" id="IPR000668">
    <property type="entry name" value="Peptidase_C1A_C"/>
</dbReference>
<dbReference type="InterPro" id="IPR039417">
    <property type="entry name" value="Peptidase_C1A_papain-like"/>
</dbReference>
<dbReference type="InterPro" id="IPR013201">
    <property type="entry name" value="Prot_inhib_I29"/>
</dbReference>
<dbReference type="PANTHER" id="PTHR12411">
    <property type="entry name" value="CYSTEINE PROTEASE FAMILY C1-RELATED"/>
    <property type="match status" value="1"/>
</dbReference>
<dbReference type="Pfam" id="PF08246">
    <property type="entry name" value="Inhibitor_I29"/>
    <property type="match status" value="1"/>
</dbReference>
<dbReference type="Pfam" id="PF00112">
    <property type="entry name" value="Peptidase_C1"/>
    <property type="match status" value="1"/>
</dbReference>
<dbReference type="PRINTS" id="PR00705">
    <property type="entry name" value="PAPAIN"/>
</dbReference>
<dbReference type="SMART" id="SM00848">
    <property type="entry name" value="Inhibitor_I29"/>
    <property type="match status" value="1"/>
</dbReference>
<dbReference type="SMART" id="SM00645">
    <property type="entry name" value="Pept_C1"/>
    <property type="match status" value="1"/>
</dbReference>
<dbReference type="SUPFAM" id="SSF54001">
    <property type="entry name" value="Cysteine proteinases"/>
    <property type="match status" value="1"/>
</dbReference>
<dbReference type="PROSITE" id="PS00014">
    <property type="entry name" value="ER_TARGET"/>
    <property type="match status" value="1"/>
</dbReference>
<dbReference type="PROSITE" id="PS00640">
    <property type="entry name" value="THIOL_PROTEASE_ASN"/>
    <property type="match status" value="1"/>
</dbReference>
<dbReference type="PROSITE" id="PS00139">
    <property type="entry name" value="THIOL_PROTEASE_CYS"/>
    <property type="match status" value="1"/>
</dbReference>
<dbReference type="PROSITE" id="PS00639">
    <property type="entry name" value="THIOL_PROTEASE_HIS"/>
    <property type="match status" value="1"/>
</dbReference>
<organism>
    <name type="scientific">Arabidopsis thaliana</name>
    <name type="common">Mouse-ear cress</name>
    <dbReference type="NCBI Taxonomy" id="3702"/>
    <lineage>
        <taxon>Eukaryota</taxon>
        <taxon>Viridiplantae</taxon>
        <taxon>Streptophyta</taxon>
        <taxon>Embryophyta</taxon>
        <taxon>Tracheophyta</taxon>
        <taxon>Spermatophyta</taxon>
        <taxon>Magnoliopsida</taxon>
        <taxon>eudicotyledons</taxon>
        <taxon>Gunneridae</taxon>
        <taxon>Pentapetalae</taxon>
        <taxon>rosids</taxon>
        <taxon>malvids</taxon>
        <taxon>Brassicales</taxon>
        <taxon>Brassicaceae</taxon>
        <taxon>Camelineae</taxon>
        <taxon>Arabidopsis</taxon>
    </lineage>
</organism>
<feature type="signal peptide" evidence="4">
    <location>
        <begin position="1"/>
        <end position="20"/>
    </location>
</feature>
<feature type="propeptide" id="PRO_0000436322" description="Activation peptide" evidence="1">
    <location>
        <begin position="21"/>
        <end position="127"/>
    </location>
</feature>
<feature type="chain" id="PRO_0000403790" description="KDEL-tailed cysteine endopeptidase CEP2">
    <location>
        <begin position="128"/>
        <end position="361"/>
    </location>
</feature>
<feature type="short sequence motif" description="Prevents secretion from ER" evidence="9">
    <location>
        <begin position="358"/>
        <end position="361"/>
    </location>
</feature>
<feature type="active site" evidence="6">
    <location>
        <position position="152"/>
    </location>
</feature>
<feature type="active site" evidence="7">
    <location>
        <position position="288"/>
    </location>
</feature>
<feature type="active site" evidence="8">
    <location>
        <position position="308"/>
    </location>
</feature>
<feature type="glycosylation site" description="N-linked (GlcNAc...) asparagine" evidence="5">
    <location>
        <position position="75"/>
    </location>
</feature>
<feature type="glycosylation site" description="N-linked (GlcNAc...) asparagine" evidence="5">
    <location>
        <position position="124"/>
    </location>
</feature>
<feature type="disulfide bond" evidence="3">
    <location>
        <begin position="149"/>
        <end position="191"/>
    </location>
</feature>
<feature type="disulfide bond" evidence="3">
    <location>
        <begin position="183"/>
        <end position="224"/>
    </location>
</feature>
<feature type="disulfide bond" evidence="3">
    <location>
        <begin position="282"/>
        <end position="333"/>
    </location>
</feature>
<proteinExistence type="evidence at protein level"/>
<protein>
    <recommendedName>
        <fullName>KDEL-tailed cysteine endopeptidase CEP2</fullName>
        <ecNumber evidence="2">3.4.22.-</ecNumber>
    </recommendedName>
</protein>
<evidence type="ECO:0000250" key="1">
    <source>
        <dbReference type="UniProtKB" id="P00785"/>
    </source>
</evidence>
<evidence type="ECO:0000250" key="2">
    <source>
        <dbReference type="UniProtKB" id="P80884"/>
    </source>
</evidence>
<evidence type="ECO:0000250" key="3">
    <source>
        <dbReference type="UniProtKB" id="P84346"/>
    </source>
</evidence>
<evidence type="ECO:0000255" key="4"/>
<evidence type="ECO:0000255" key="5">
    <source>
        <dbReference type="PROSITE-ProRule" id="PRU00498"/>
    </source>
</evidence>
<evidence type="ECO:0000255" key="6">
    <source>
        <dbReference type="PROSITE-ProRule" id="PRU10088"/>
    </source>
</evidence>
<evidence type="ECO:0000255" key="7">
    <source>
        <dbReference type="PROSITE-ProRule" id="PRU10089"/>
    </source>
</evidence>
<evidence type="ECO:0000255" key="8">
    <source>
        <dbReference type="PROSITE-ProRule" id="PRU10090"/>
    </source>
</evidence>
<evidence type="ECO:0000255" key="9">
    <source>
        <dbReference type="PROSITE-ProRule" id="PRU10138"/>
    </source>
</evidence>
<evidence type="ECO:0000269" key="10">
    <source>
    </source>
</evidence>
<evidence type="ECO:0000269" key="11">
    <source>
    </source>
</evidence>
<evidence type="ECO:0000303" key="12">
    <source>
    </source>
</evidence>
<evidence type="ECO:0000312" key="13">
    <source>
        <dbReference type="Araport" id="AT3G48340"/>
    </source>
</evidence>
<evidence type="ECO:0000312" key="14">
    <source>
        <dbReference type="EMBL" id="CAB41164.1"/>
    </source>
</evidence>
<name>CEP2_ARATH</name>
<reference key="1">
    <citation type="journal article" date="2000" name="Nature">
        <title>Sequence and analysis of chromosome 3 of the plant Arabidopsis thaliana.</title>
        <authorList>
            <person name="Salanoubat M."/>
            <person name="Lemcke K."/>
            <person name="Rieger M."/>
            <person name="Ansorge W."/>
            <person name="Unseld M."/>
            <person name="Fartmann B."/>
            <person name="Valle G."/>
            <person name="Bloecker H."/>
            <person name="Perez-Alonso M."/>
            <person name="Obermaier B."/>
            <person name="Delseny M."/>
            <person name="Boutry M."/>
            <person name="Grivell L.A."/>
            <person name="Mache R."/>
            <person name="Puigdomenech P."/>
            <person name="De Simone V."/>
            <person name="Choisne N."/>
            <person name="Artiguenave F."/>
            <person name="Robert C."/>
            <person name="Brottier P."/>
            <person name="Wincker P."/>
            <person name="Cattolico L."/>
            <person name="Weissenbach J."/>
            <person name="Saurin W."/>
            <person name="Quetier F."/>
            <person name="Schaefer M."/>
            <person name="Mueller-Auer S."/>
            <person name="Gabel C."/>
            <person name="Fuchs M."/>
            <person name="Benes V."/>
            <person name="Wurmbach E."/>
            <person name="Drzonek H."/>
            <person name="Erfle H."/>
            <person name="Jordan N."/>
            <person name="Bangert S."/>
            <person name="Wiedelmann R."/>
            <person name="Kranz H."/>
            <person name="Voss H."/>
            <person name="Holland R."/>
            <person name="Brandt P."/>
            <person name="Nyakatura G."/>
            <person name="Vezzi A."/>
            <person name="D'Angelo M."/>
            <person name="Pallavicini A."/>
            <person name="Toppo S."/>
            <person name="Simionati B."/>
            <person name="Conrad A."/>
            <person name="Hornischer K."/>
            <person name="Kauer G."/>
            <person name="Loehnert T.-H."/>
            <person name="Nordsiek G."/>
            <person name="Reichelt J."/>
            <person name="Scharfe M."/>
            <person name="Schoen O."/>
            <person name="Bargues M."/>
            <person name="Terol J."/>
            <person name="Climent J."/>
            <person name="Navarro P."/>
            <person name="Collado C."/>
            <person name="Perez-Perez A."/>
            <person name="Ottenwaelder B."/>
            <person name="Duchemin D."/>
            <person name="Cooke R."/>
            <person name="Laudie M."/>
            <person name="Berger-Llauro C."/>
            <person name="Purnelle B."/>
            <person name="Masuy D."/>
            <person name="de Haan M."/>
            <person name="Maarse A.C."/>
            <person name="Alcaraz J.-P."/>
            <person name="Cottet A."/>
            <person name="Casacuberta E."/>
            <person name="Monfort A."/>
            <person name="Argiriou A."/>
            <person name="Flores M."/>
            <person name="Liguori R."/>
            <person name="Vitale D."/>
            <person name="Mannhaupt G."/>
            <person name="Haase D."/>
            <person name="Schoof H."/>
            <person name="Rudd S."/>
            <person name="Zaccaria P."/>
            <person name="Mewes H.-W."/>
            <person name="Mayer K.F.X."/>
            <person name="Kaul S."/>
            <person name="Town C.D."/>
            <person name="Koo H.L."/>
            <person name="Tallon L.J."/>
            <person name="Jenkins J."/>
            <person name="Rooney T."/>
            <person name="Rizzo M."/>
            <person name="Walts A."/>
            <person name="Utterback T."/>
            <person name="Fujii C.Y."/>
            <person name="Shea T.P."/>
            <person name="Creasy T.H."/>
            <person name="Haas B."/>
            <person name="Maiti R."/>
            <person name="Wu D."/>
            <person name="Peterson J."/>
            <person name="Van Aken S."/>
            <person name="Pai G."/>
            <person name="Militscher J."/>
            <person name="Sellers P."/>
            <person name="Gill J.E."/>
            <person name="Feldblyum T.V."/>
            <person name="Preuss D."/>
            <person name="Lin X."/>
            <person name="Nierman W.C."/>
            <person name="Salzberg S.L."/>
            <person name="White O."/>
            <person name="Venter J.C."/>
            <person name="Fraser C.M."/>
            <person name="Kaneko T."/>
            <person name="Nakamura Y."/>
            <person name="Sato S."/>
            <person name="Kato T."/>
            <person name="Asamizu E."/>
            <person name="Sasamoto S."/>
            <person name="Kimura T."/>
            <person name="Idesawa K."/>
            <person name="Kawashima K."/>
            <person name="Kishida Y."/>
            <person name="Kiyokawa C."/>
            <person name="Kohara M."/>
            <person name="Matsumoto M."/>
            <person name="Matsuno A."/>
            <person name="Muraki A."/>
            <person name="Nakayama S."/>
            <person name="Nakazaki N."/>
            <person name="Shinpo S."/>
            <person name="Takeuchi C."/>
            <person name="Wada T."/>
            <person name="Watanabe A."/>
            <person name="Yamada M."/>
            <person name="Yasuda M."/>
            <person name="Tabata S."/>
        </authorList>
    </citation>
    <scope>NUCLEOTIDE SEQUENCE [LARGE SCALE GENOMIC DNA]</scope>
    <source>
        <strain>cv. Columbia</strain>
    </source>
</reference>
<reference key="2">
    <citation type="journal article" date="2017" name="Plant J.">
        <title>Araport11: a complete reannotation of the Arabidopsis thaliana reference genome.</title>
        <authorList>
            <person name="Cheng C.Y."/>
            <person name="Krishnakumar V."/>
            <person name="Chan A.P."/>
            <person name="Thibaud-Nissen F."/>
            <person name="Schobel S."/>
            <person name="Town C.D."/>
        </authorList>
    </citation>
    <scope>GENOME REANNOTATION</scope>
    <source>
        <strain>cv. Columbia</strain>
    </source>
</reference>
<reference key="3">
    <citation type="journal article" date="2008" name="Am. J. Bot.">
        <title>KDEL-tailed cysteine endopeptidases involved in programmed cell death, intercalation of new cells, and dismantling of extensin scaffolds.</title>
        <authorList>
            <person name="Helm M."/>
            <person name="Schmid M."/>
            <person name="Hierl G."/>
            <person name="Terneus K."/>
            <person name="Tan L."/>
            <person name="Lottspeich F."/>
            <person name="Kieliszewski M.J."/>
            <person name="Gietl C."/>
        </authorList>
    </citation>
    <scope>FUNCTION</scope>
    <scope>TISSUE SPECIFICITY</scope>
</reference>
<reference key="4">
    <citation type="journal article" date="2014" name="Plant Mol. Biol.">
        <title>Ex vivo processing for maturation of Arabidopsis KDEL-tailed cysteine endopeptidase 2 (AtCEP2) pro-enzyme and its storage in endoplasmic reticulum derived organelles.</title>
        <authorList>
            <person name="Hierl G."/>
            <person name="Hoewing T."/>
            <person name="Isono E."/>
            <person name="Lottspeich F."/>
            <person name="Gietl C."/>
        </authorList>
    </citation>
    <scope>IDENTIFICATION BY MASS SPECTROMETRY</scope>
    <scope>SUBCELLULAR LOCATION</scope>
</reference>
<comment type="function">
    <text evidence="10">Involved in the final stage of developmental programmed cell death and in intercalation of new cells. Cleaves extensins, thus probably supporting the final cell collapse.</text>
</comment>
<comment type="subcellular location">
    <subcellularLocation>
        <location evidence="9 11">Endoplasmic reticulum</location>
    </subcellularLocation>
    <text evidence="11">Detected in ER bodies and another type of ER-derived vesicles.</text>
</comment>
<comment type="tissue specificity">
    <text evidence="10">Expressed in roots, stems, rosette and cauline leaves, flowers, buds and green siliques. Found in the tip of young primary leaves, in very young root tips and at later stages in all tissues of lateral root, including the vascular bundle. Not expressed in lateral root primordia, while directly emerging through the epidermis.</text>
</comment>
<comment type="similarity">
    <text evidence="6 7 8">Belongs to the peptidase C1 family.</text>
</comment>